<accession>P31914</accession>
<sequence length="383" mass="41539">MTRAVALTGRLTFRPGQVPGIAGERPQLAERLLRGRPGEAAPHLLPRLFALCGEAHGVTAALAVNAALGRVAAPEPALFRRLAHETACEHIRRIWLDWPLHLASGPVPSTFNSRVPQRELIDCPMLKASHSESAAMLAWLERAVLGTAPRRWLAHWHEDPAGCLSTWATKIHTWPAMAMRQCMQVAQAMASMPAPLLPHASTDALRELAQSLAGEADFPCRPSWQGRVFETGSWTRLGLADCSAFGNMWLRLGARIAELVLLSLRDGMQASGEAHDSPCLQMGALALAPGQALAWSEMARGLLMHWVRLVDTPQGPVIGGYRIIAPTEWNFHPDGAVAHMLAHLAPFDAADVRRSIGILVAAYDPCVPYTVEFAESLGDTVHA</sequence>
<proteinExistence type="predicted"/>
<reference key="1">
    <citation type="journal article" date="1992" name="J. Bacteriol.">
        <title>A gene complex coding for the membrane-bound hydrogenase of Alcaligenes eutrophus H16.</title>
        <authorList>
            <person name="Kortlueke C."/>
            <person name="Horstmann K."/>
            <person name="Schwartz E."/>
            <person name="Rohde M."/>
            <person name="Binsack R."/>
            <person name="Friedrich B."/>
        </authorList>
    </citation>
    <scope>NUCLEOTIDE SEQUENCE [GENOMIC DNA]</scope>
</reference>
<reference key="2">
    <citation type="journal article" date="2003" name="J. Mol. Biol.">
        <title>Complete nucleotide sequence of pHG1: a Ralstonia eutropha H16 megaplasmid encoding key enzymes of H(2)-based lithoautotrophy and anaerobiosis.</title>
        <authorList>
            <person name="Schwartz E."/>
            <person name="Henne A."/>
            <person name="Cramm R."/>
            <person name="Eitinger T."/>
            <person name="Friedrich B."/>
            <person name="Gottschalk G."/>
        </authorList>
    </citation>
    <scope>NUCLEOTIDE SEQUENCE [LARGE SCALE GENOMIC DNA]</scope>
    <source>
        <strain>ATCC 17699 / DSM 428 / KCTC 22496 / NCIMB 10442 / H16 / Stanier 337</strain>
    </source>
</reference>
<gene>
    <name type="primary">hoxV</name>
    <name type="ordered locus">PHG011</name>
</gene>
<feature type="chain" id="PRO_0000201465" description="Hydrogenase expression/formation protein HoxV">
    <location>
        <begin position="1"/>
        <end position="383"/>
    </location>
</feature>
<name>HOXV_CUPNH</name>
<organism>
    <name type="scientific">Cupriavidus necator (strain ATCC 17699 / DSM 428 / KCTC 22496 / NCIMB 10442 / H16 / Stanier 337)</name>
    <name type="common">Ralstonia eutropha</name>
    <dbReference type="NCBI Taxonomy" id="381666"/>
    <lineage>
        <taxon>Bacteria</taxon>
        <taxon>Pseudomonadati</taxon>
        <taxon>Pseudomonadota</taxon>
        <taxon>Betaproteobacteria</taxon>
        <taxon>Burkholderiales</taxon>
        <taxon>Burkholderiaceae</taxon>
        <taxon>Cupriavidus</taxon>
    </lineage>
</organism>
<dbReference type="EMBL" id="M96433">
    <property type="protein sequence ID" value="AAA16471.1"/>
    <property type="molecule type" value="Unassigned_DNA"/>
</dbReference>
<dbReference type="EMBL" id="AY305378">
    <property type="protein sequence ID" value="AAP85767.1"/>
    <property type="molecule type" value="Genomic_DNA"/>
</dbReference>
<dbReference type="PIR" id="B46447">
    <property type="entry name" value="B46447"/>
</dbReference>
<dbReference type="RefSeq" id="WP_011153936.1">
    <property type="nucleotide sequence ID" value="NC_005241.1"/>
</dbReference>
<dbReference type="KEGG" id="reh:PHG011"/>
<dbReference type="PATRIC" id="fig|381666.6.peg.8"/>
<dbReference type="eggNOG" id="COG0374">
    <property type="taxonomic scope" value="Bacteria"/>
</dbReference>
<dbReference type="HOGENOM" id="CLU_054514_0_0_4"/>
<dbReference type="OrthoDB" id="9157196at2"/>
<dbReference type="Proteomes" id="UP000008210">
    <property type="component" value="Plasmid megaplasmid pHG1"/>
</dbReference>
<dbReference type="Gene3D" id="1.10.645.10">
    <property type="entry name" value="Cytochrome-c3 Hydrogenase, chain B"/>
    <property type="match status" value="2"/>
</dbReference>
<dbReference type="InterPro" id="IPR029014">
    <property type="entry name" value="NiFe-Hase_large"/>
</dbReference>
<dbReference type="InterPro" id="IPR050867">
    <property type="entry name" value="NiFe/NiFeSe_hydrgnase_LSU"/>
</dbReference>
<dbReference type="PANTHER" id="PTHR42958:SF4">
    <property type="entry name" value="HYDROGENASE EXPRESSION_FORMATION PROTEIN HUPK"/>
    <property type="match status" value="1"/>
</dbReference>
<dbReference type="PANTHER" id="PTHR42958">
    <property type="entry name" value="HYDROGENASE-2 LARGE CHAIN"/>
    <property type="match status" value="1"/>
</dbReference>
<dbReference type="SUPFAM" id="SSF56762">
    <property type="entry name" value="HydB/Nqo4-like"/>
    <property type="match status" value="1"/>
</dbReference>
<keyword id="KW-0614">Plasmid</keyword>
<keyword id="KW-1185">Reference proteome</keyword>
<geneLocation type="plasmid">
    <name>megaplasmid pHG1</name>
</geneLocation>
<protein>
    <recommendedName>
        <fullName>Hydrogenase expression/formation protein HoxV</fullName>
    </recommendedName>
</protein>